<comment type="function">
    <text evidence="1">One of the primary rRNA binding proteins, it binds directly to 16S rRNA where it helps nucleate assembly of the platform of the 30S subunit by binding and bridging several RNA helices of the 16S rRNA.</text>
</comment>
<comment type="function">
    <text evidence="1">Forms an intersubunit bridge (bridge B4) with the 23S rRNA of the 50S subunit in the ribosome.</text>
</comment>
<comment type="subunit">
    <text evidence="1">Part of the 30S ribosomal subunit. Forms a bridge to the 50S subunit in the 70S ribosome, contacting the 23S rRNA.</text>
</comment>
<comment type="similarity">
    <text evidence="1">Belongs to the universal ribosomal protein uS15 family.</text>
</comment>
<gene>
    <name evidence="1" type="primary">rpsO</name>
    <name type="ordered locus">NMC0552</name>
</gene>
<organism>
    <name type="scientific">Neisseria meningitidis serogroup C / serotype 2a (strain ATCC 700532 / DSM 15464 / FAM18)</name>
    <dbReference type="NCBI Taxonomy" id="272831"/>
    <lineage>
        <taxon>Bacteria</taxon>
        <taxon>Pseudomonadati</taxon>
        <taxon>Pseudomonadota</taxon>
        <taxon>Betaproteobacteria</taxon>
        <taxon>Neisseriales</taxon>
        <taxon>Neisseriaceae</taxon>
        <taxon>Neisseria</taxon>
    </lineage>
</organism>
<reference key="1">
    <citation type="journal article" date="2007" name="PLoS Genet.">
        <title>Meningococcal genetic variation mechanisms viewed through comparative analysis of serogroup C strain FAM18.</title>
        <authorList>
            <person name="Bentley S.D."/>
            <person name="Vernikos G.S."/>
            <person name="Snyder L.A.S."/>
            <person name="Churcher C."/>
            <person name="Arrowsmith C."/>
            <person name="Chillingworth T."/>
            <person name="Cronin A."/>
            <person name="Davis P.H."/>
            <person name="Holroyd N.E."/>
            <person name="Jagels K."/>
            <person name="Maddison M."/>
            <person name="Moule S."/>
            <person name="Rabbinowitsch E."/>
            <person name="Sharp S."/>
            <person name="Unwin L."/>
            <person name="Whitehead S."/>
            <person name="Quail M.A."/>
            <person name="Achtman M."/>
            <person name="Barrell B.G."/>
            <person name="Saunders N.J."/>
            <person name="Parkhill J."/>
        </authorList>
    </citation>
    <scope>NUCLEOTIDE SEQUENCE [LARGE SCALE GENOMIC DNA]</scope>
    <source>
        <strain>ATCC 700532 / DSM 15464 / FAM18</strain>
    </source>
</reference>
<name>RS15_NEIMF</name>
<protein>
    <recommendedName>
        <fullName evidence="1">Small ribosomal subunit protein uS15</fullName>
    </recommendedName>
    <alternativeName>
        <fullName evidence="2">30S ribosomal protein S15</fullName>
    </alternativeName>
</protein>
<accession>A1KSL7</accession>
<proteinExistence type="inferred from homology"/>
<keyword id="KW-0687">Ribonucleoprotein</keyword>
<keyword id="KW-0689">Ribosomal protein</keyword>
<keyword id="KW-0694">RNA-binding</keyword>
<keyword id="KW-0699">rRNA-binding</keyword>
<feature type="chain" id="PRO_1000054826" description="Small ribosomal subunit protein uS15">
    <location>
        <begin position="1"/>
        <end position="89"/>
    </location>
</feature>
<dbReference type="EMBL" id="AM421808">
    <property type="protein sequence ID" value="CAM09847.1"/>
    <property type="molecule type" value="Genomic_DNA"/>
</dbReference>
<dbReference type="RefSeq" id="WP_002217790.1">
    <property type="nucleotide sequence ID" value="NC_008767.1"/>
</dbReference>
<dbReference type="SMR" id="A1KSL7"/>
<dbReference type="GeneID" id="93386561"/>
<dbReference type="KEGG" id="nmc:NMC0552"/>
<dbReference type="HOGENOM" id="CLU_148518_0_0_4"/>
<dbReference type="Proteomes" id="UP000002286">
    <property type="component" value="Chromosome"/>
</dbReference>
<dbReference type="GO" id="GO:0022627">
    <property type="term" value="C:cytosolic small ribosomal subunit"/>
    <property type="evidence" value="ECO:0007669"/>
    <property type="project" value="TreeGrafter"/>
</dbReference>
<dbReference type="GO" id="GO:0019843">
    <property type="term" value="F:rRNA binding"/>
    <property type="evidence" value="ECO:0007669"/>
    <property type="project" value="UniProtKB-UniRule"/>
</dbReference>
<dbReference type="GO" id="GO:0003735">
    <property type="term" value="F:structural constituent of ribosome"/>
    <property type="evidence" value="ECO:0007669"/>
    <property type="project" value="InterPro"/>
</dbReference>
<dbReference type="GO" id="GO:0006412">
    <property type="term" value="P:translation"/>
    <property type="evidence" value="ECO:0007669"/>
    <property type="project" value="UniProtKB-UniRule"/>
</dbReference>
<dbReference type="CDD" id="cd00353">
    <property type="entry name" value="Ribosomal_S15p_S13e"/>
    <property type="match status" value="1"/>
</dbReference>
<dbReference type="FunFam" id="1.10.287.10:FF:000002">
    <property type="entry name" value="30S ribosomal protein S15"/>
    <property type="match status" value="1"/>
</dbReference>
<dbReference type="Gene3D" id="6.10.250.3130">
    <property type="match status" value="1"/>
</dbReference>
<dbReference type="Gene3D" id="1.10.287.10">
    <property type="entry name" value="S15/NS1, RNA-binding"/>
    <property type="match status" value="1"/>
</dbReference>
<dbReference type="HAMAP" id="MF_01343_B">
    <property type="entry name" value="Ribosomal_uS15_B"/>
    <property type="match status" value="1"/>
</dbReference>
<dbReference type="InterPro" id="IPR000589">
    <property type="entry name" value="Ribosomal_uS15"/>
</dbReference>
<dbReference type="InterPro" id="IPR005290">
    <property type="entry name" value="Ribosomal_uS15_bac-type"/>
</dbReference>
<dbReference type="InterPro" id="IPR009068">
    <property type="entry name" value="uS15_NS1_RNA-bd_sf"/>
</dbReference>
<dbReference type="NCBIfam" id="TIGR00952">
    <property type="entry name" value="S15_bact"/>
    <property type="match status" value="1"/>
</dbReference>
<dbReference type="PANTHER" id="PTHR23321">
    <property type="entry name" value="RIBOSOMAL PROTEIN S15, BACTERIAL AND ORGANELLAR"/>
    <property type="match status" value="1"/>
</dbReference>
<dbReference type="PANTHER" id="PTHR23321:SF26">
    <property type="entry name" value="SMALL RIBOSOMAL SUBUNIT PROTEIN US15M"/>
    <property type="match status" value="1"/>
</dbReference>
<dbReference type="Pfam" id="PF00312">
    <property type="entry name" value="Ribosomal_S15"/>
    <property type="match status" value="1"/>
</dbReference>
<dbReference type="SMART" id="SM01387">
    <property type="entry name" value="Ribosomal_S15"/>
    <property type="match status" value="1"/>
</dbReference>
<dbReference type="SUPFAM" id="SSF47060">
    <property type="entry name" value="S15/NS1 RNA-binding domain"/>
    <property type="match status" value="1"/>
</dbReference>
<dbReference type="PROSITE" id="PS00362">
    <property type="entry name" value="RIBOSOMAL_S15"/>
    <property type="match status" value="1"/>
</dbReference>
<evidence type="ECO:0000255" key="1">
    <source>
        <dbReference type="HAMAP-Rule" id="MF_01343"/>
    </source>
</evidence>
<evidence type="ECO:0000305" key="2"/>
<sequence>MALTVEQKAQIVKDFQRKEGDTGSSEVQVALLTFRINDLTPHFKANPKDHHSRRGLLKMVSQRRRLLAYLRRTQPDTYRALITRLGLRK</sequence>